<comment type="function">
    <text evidence="1">Required for the proper function of SLD3 at the initiation of DNA replication. Binds to SLD3 and reduces its affinity for CDC45, a component of the replication fork. Required for mitochondrial morphology (By similarity).</text>
</comment>
<comment type="subunit">
    <text evidence="1">Interacts with SLD3.</text>
</comment>
<comment type="subcellular location">
    <subcellularLocation>
        <location evidence="1">Nucleus</location>
    </subcellularLocation>
    <subcellularLocation>
        <location evidence="1">Cytoplasm</location>
        <location evidence="1">Cytoskeleton</location>
        <location evidence="1">Spindle pole</location>
    </subcellularLocation>
</comment>
<comment type="similarity">
    <text evidence="2">Belongs to the SLD7 family.</text>
</comment>
<feature type="chain" id="PRO_0000411035" description="Mitochondrial morphogenesis protein SLD7">
    <location>
        <begin position="1"/>
        <end position="257"/>
    </location>
</feature>
<keyword id="KW-0131">Cell cycle</keyword>
<keyword id="KW-0963">Cytoplasm</keyword>
<keyword id="KW-0206">Cytoskeleton</keyword>
<keyword id="KW-0235">DNA replication</keyword>
<keyword id="KW-0539">Nucleus</keyword>
<evidence type="ECO:0000250" key="1"/>
<evidence type="ECO:0000305" key="2"/>
<organism>
    <name type="scientific">Saccharomyces cerevisiae (strain Lalvin QA23)</name>
    <name type="common">Baker's yeast</name>
    <dbReference type="NCBI Taxonomy" id="764098"/>
    <lineage>
        <taxon>Eukaryota</taxon>
        <taxon>Fungi</taxon>
        <taxon>Dikarya</taxon>
        <taxon>Ascomycota</taxon>
        <taxon>Saccharomycotina</taxon>
        <taxon>Saccharomycetes</taxon>
        <taxon>Saccharomycetales</taxon>
        <taxon>Saccharomycetaceae</taxon>
        <taxon>Saccharomyces</taxon>
    </lineage>
</organism>
<dbReference type="EMBL" id="ADVV01000079">
    <property type="protein sequence ID" value="EGA80793.1"/>
    <property type="molecule type" value="Genomic_DNA"/>
</dbReference>
<dbReference type="HOGENOM" id="CLU_072105_0_0_1"/>
<dbReference type="OrthoDB" id="34738at4893"/>
<dbReference type="GO" id="GO:0005737">
    <property type="term" value="C:cytoplasm"/>
    <property type="evidence" value="ECO:0007669"/>
    <property type="project" value="UniProtKB-KW"/>
</dbReference>
<dbReference type="GO" id="GO:0005634">
    <property type="term" value="C:nucleus"/>
    <property type="evidence" value="ECO:0007669"/>
    <property type="project" value="UniProtKB-SubCell"/>
</dbReference>
<dbReference type="GO" id="GO:0000922">
    <property type="term" value="C:spindle pole"/>
    <property type="evidence" value="ECO:0007669"/>
    <property type="project" value="UniProtKB-SubCell"/>
</dbReference>
<dbReference type="GO" id="GO:0006260">
    <property type="term" value="P:DNA replication"/>
    <property type="evidence" value="ECO:0007669"/>
    <property type="project" value="UniProtKB-KW"/>
</dbReference>
<dbReference type="GO" id="GO:0030174">
    <property type="term" value="P:regulation of DNA-templated DNA replication initiation"/>
    <property type="evidence" value="ECO:0007669"/>
    <property type="project" value="InterPro"/>
</dbReference>
<dbReference type="InterPro" id="IPR016808">
    <property type="entry name" value="Sld7"/>
</dbReference>
<dbReference type="InterPro" id="IPR041260">
    <property type="entry name" value="Sld7_C"/>
</dbReference>
<dbReference type="InterPro" id="IPR041564">
    <property type="entry name" value="Sld7_N"/>
</dbReference>
<dbReference type="Pfam" id="PF18596">
    <property type="entry name" value="Sld7_C"/>
    <property type="match status" value="1"/>
</dbReference>
<dbReference type="Pfam" id="PF18636">
    <property type="entry name" value="Sld7_N"/>
    <property type="match status" value="1"/>
</dbReference>
<dbReference type="PIRSF" id="PIRSF022788">
    <property type="entry name" value="UCP022788"/>
    <property type="match status" value="1"/>
</dbReference>
<proteinExistence type="inferred from homology"/>
<protein>
    <recommendedName>
        <fullName>Mitochondrial morphogenesis protein SLD7</fullName>
    </recommendedName>
    <alternativeName>
        <fullName>Synthetic lethality with DPB11-24 mutation protein 7</fullName>
    </alternativeName>
</protein>
<accession>E7KUA5</accession>
<sequence>MSRKLCTLNFTLSGKQGSLVIRDIQLWSNRPTASKSTSELRGQFIQYVDLAKLPLWVRSTNMNTYRCYSTSATAQAYFKSKLRNANRGIVIELSDKVDQRSQEPAYLIIFRENTELNCFQVDLTMKHEFDGQVTKLKQEIGKTRASVSKEGSIDIIIQQSQQRKIGTKTKVYRNVHINDKRLQFNETLSKLILGGLRLRGISNSITDYQKLYKITFDAAEFTHRDELKRISMGSXEEVSFESLQETVETLLKLFTKS</sequence>
<reference key="1">
    <citation type="journal article" date="2011" name="PLoS Genet.">
        <title>Whole-genome comparison reveals novel genetic elements that characterize the genome of industrial strains of Saccharomyces cerevisiae.</title>
        <authorList>
            <person name="Borneman A.R."/>
            <person name="Desany B.A."/>
            <person name="Riches D."/>
            <person name="Affourtit J.P."/>
            <person name="Forgan A.H."/>
            <person name="Pretorius I.S."/>
            <person name="Egholm M."/>
            <person name="Chambers P.J."/>
        </authorList>
    </citation>
    <scope>NUCLEOTIDE SEQUENCE [LARGE SCALE GENOMIC DNA]</scope>
    <source>
        <strain>Lalvin QA23</strain>
    </source>
</reference>
<gene>
    <name type="primary">SLD7</name>
    <name type="ORF">QA23_4431</name>
</gene>
<name>SLD7_YEASL</name>